<organism>
    <name type="scientific">Salmonella schwarzengrund (strain CVM19633)</name>
    <dbReference type="NCBI Taxonomy" id="439843"/>
    <lineage>
        <taxon>Bacteria</taxon>
        <taxon>Pseudomonadati</taxon>
        <taxon>Pseudomonadota</taxon>
        <taxon>Gammaproteobacteria</taxon>
        <taxon>Enterobacterales</taxon>
        <taxon>Enterobacteriaceae</taxon>
        <taxon>Salmonella</taxon>
    </lineage>
</organism>
<name>AROL_SALSV</name>
<reference key="1">
    <citation type="journal article" date="2011" name="J. Bacteriol.">
        <title>Comparative genomics of 28 Salmonella enterica isolates: evidence for CRISPR-mediated adaptive sublineage evolution.</title>
        <authorList>
            <person name="Fricke W.F."/>
            <person name="Mammel M.K."/>
            <person name="McDermott P.F."/>
            <person name="Tartera C."/>
            <person name="White D.G."/>
            <person name="Leclerc J.E."/>
            <person name="Ravel J."/>
            <person name="Cebula T.A."/>
        </authorList>
    </citation>
    <scope>NUCLEOTIDE SEQUENCE [LARGE SCALE GENOMIC DNA]</scope>
    <source>
        <strain>CVM19633</strain>
    </source>
</reference>
<gene>
    <name evidence="1" type="primary">aroL</name>
    <name type="ordered locus">SeSA_A0444</name>
</gene>
<keyword id="KW-0028">Amino-acid biosynthesis</keyword>
<keyword id="KW-0057">Aromatic amino acid biosynthesis</keyword>
<keyword id="KW-0067">ATP-binding</keyword>
<keyword id="KW-0963">Cytoplasm</keyword>
<keyword id="KW-0418">Kinase</keyword>
<keyword id="KW-0460">Magnesium</keyword>
<keyword id="KW-0479">Metal-binding</keyword>
<keyword id="KW-0547">Nucleotide-binding</keyword>
<keyword id="KW-0808">Transferase</keyword>
<comment type="function">
    <text evidence="1">Catalyzes the specific phosphorylation of the 3-hydroxyl group of shikimic acid using ATP as a cosubstrate.</text>
</comment>
<comment type="catalytic activity">
    <reaction evidence="1">
        <text>shikimate + ATP = 3-phosphoshikimate + ADP + H(+)</text>
        <dbReference type="Rhea" id="RHEA:13121"/>
        <dbReference type="ChEBI" id="CHEBI:15378"/>
        <dbReference type="ChEBI" id="CHEBI:30616"/>
        <dbReference type="ChEBI" id="CHEBI:36208"/>
        <dbReference type="ChEBI" id="CHEBI:145989"/>
        <dbReference type="ChEBI" id="CHEBI:456216"/>
        <dbReference type="EC" id="2.7.1.71"/>
    </reaction>
</comment>
<comment type="cofactor">
    <cofactor evidence="1">
        <name>Mg(2+)</name>
        <dbReference type="ChEBI" id="CHEBI:18420"/>
    </cofactor>
    <text evidence="1">Binds 1 Mg(2+) ion per subunit.</text>
</comment>
<comment type="pathway">
    <text evidence="1">Metabolic intermediate biosynthesis; chorismate biosynthesis; chorismate from D-erythrose 4-phosphate and phosphoenolpyruvate: step 5/7.</text>
</comment>
<comment type="subunit">
    <text evidence="1">Monomer.</text>
</comment>
<comment type="subcellular location">
    <subcellularLocation>
        <location evidence="1">Cytoplasm</location>
    </subcellularLocation>
</comment>
<comment type="domain">
    <text evidence="1">The LID domain closes over the active site upon ATP binding.</text>
</comment>
<comment type="similarity">
    <text evidence="1">Belongs to the shikimate kinase family. AroL subfamily.</text>
</comment>
<accession>B4TZG1</accession>
<protein>
    <recommendedName>
        <fullName evidence="1">Shikimate kinase 2</fullName>
        <shortName evidence="1">SK 2</shortName>
        <ecNumber evidence="1">2.7.1.71</ecNumber>
    </recommendedName>
</protein>
<evidence type="ECO:0000255" key="1">
    <source>
        <dbReference type="HAMAP-Rule" id="MF_01269"/>
    </source>
</evidence>
<sequence length="181" mass="19848">MMQPLYLVGPRGCGKTTIGMALAQATGFRFADTDRWLQSHVQMSVADIVEKEGWGGFRARETAALEAVSAPSTVVATGGGIILTEYNRRYMHRVGVVIYLCAPVSTLVNRLEAEPEAELRPTLTGKPLSEEVREVLEQRDALYRETAHYIIDATKTPAQVVSEIIAALPPSTQRLQGDVYT</sequence>
<proteinExistence type="inferred from homology"/>
<feature type="chain" id="PRO_1000140144" description="Shikimate kinase 2">
    <location>
        <begin position="1"/>
        <end position="181"/>
    </location>
</feature>
<feature type="region of interest" description="LID domain">
    <location>
        <begin position="112"/>
        <end position="126"/>
    </location>
</feature>
<feature type="binding site" evidence="1">
    <location>
        <begin position="12"/>
        <end position="17"/>
    </location>
    <ligand>
        <name>ATP</name>
        <dbReference type="ChEBI" id="CHEBI:30616"/>
    </ligand>
</feature>
<feature type="binding site" evidence="1">
    <location>
        <position position="16"/>
    </location>
    <ligand>
        <name>Mg(2+)</name>
        <dbReference type="ChEBI" id="CHEBI:18420"/>
    </ligand>
</feature>
<feature type="binding site" evidence="1">
    <location>
        <position position="32"/>
    </location>
    <ligand>
        <name>Mg(2+)</name>
        <dbReference type="ChEBI" id="CHEBI:18420"/>
    </ligand>
</feature>
<feature type="binding site" evidence="1">
    <location>
        <position position="34"/>
    </location>
    <ligand>
        <name>substrate</name>
    </ligand>
</feature>
<feature type="binding site" evidence="1">
    <location>
        <position position="58"/>
    </location>
    <ligand>
        <name>substrate</name>
    </ligand>
</feature>
<feature type="binding site" evidence="1">
    <location>
        <position position="79"/>
    </location>
    <ligand>
        <name>substrate</name>
    </ligand>
</feature>
<feature type="binding site" evidence="1">
    <location>
        <position position="120"/>
    </location>
    <ligand>
        <name>ATP</name>
        <dbReference type="ChEBI" id="CHEBI:30616"/>
    </ligand>
</feature>
<feature type="binding site" evidence="1">
    <location>
        <position position="139"/>
    </location>
    <ligand>
        <name>substrate</name>
    </ligand>
</feature>
<dbReference type="EC" id="2.7.1.71" evidence="1"/>
<dbReference type="EMBL" id="CP001127">
    <property type="protein sequence ID" value="ACF89886.1"/>
    <property type="molecule type" value="Genomic_DNA"/>
</dbReference>
<dbReference type="RefSeq" id="WP_000983571.1">
    <property type="nucleotide sequence ID" value="NC_011094.1"/>
</dbReference>
<dbReference type="SMR" id="B4TZG1"/>
<dbReference type="KEGG" id="sew:SeSA_A0444"/>
<dbReference type="HOGENOM" id="CLU_057607_4_3_6"/>
<dbReference type="UniPathway" id="UPA00053">
    <property type="reaction ID" value="UER00088"/>
</dbReference>
<dbReference type="Proteomes" id="UP000001865">
    <property type="component" value="Chromosome"/>
</dbReference>
<dbReference type="GO" id="GO:0005829">
    <property type="term" value="C:cytosol"/>
    <property type="evidence" value="ECO:0007669"/>
    <property type="project" value="TreeGrafter"/>
</dbReference>
<dbReference type="GO" id="GO:0005524">
    <property type="term" value="F:ATP binding"/>
    <property type="evidence" value="ECO:0007669"/>
    <property type="project" value="UniProtKB-UniRule"/>
</dbReference>
<dbReference type="GO" id="GO:0000287">
    <property type="term" value="F:magnesium ion binding"/>
    <property type="evidence" value="ECO:0007669"/>
    <property type="project" value="UniProtKB-UniRule"/>
</dbReference>
<dbReference type="GO" id="GO:0004765">
    <property type="term" value="F:shikimate kinase activity"/>
    <property type="evidence" value="ECO:0007669"/>
    <property type="project" value="UniProtKB-UniRule"/>
</dbReference>
<dbReference type="GO" id="GO:0008652">
    <property type="term" value="P:amino acid biosynthetic process"/>
    <property type="evidence" value="ECO:0007669"/>
    <property type="project" value="UniProtKB-KW"/>
</dbReference>
<dbReference type="GO" id="GO:0009073">
    <property type="term" value="P:aromatic amino acid family biosynthetic process"/>
    <property type="evidence" value="ECO:0007669"/>
    <property type="project" value="UniProtKB-KW"/>
</dbReference>
<dbReference type="GO" id="GO:0009423">
    <property type="term" value="P:chorismate biosynthetic process"/>
    <property type="evidence" value="ECO:0007669"/>
    <property type="project" value="UniProtKB-UniRule"/>
</dbReference>
<dbReference type="CDD" id="cd00464">
    <property type="entry name" value="SK"/>
    <property type="match status" value="1"/>
</dbReference>
<dbReference type="FunFam" id="3.40.50.300:FF:000408">
    <property type="entry name" value="Shikimate kinase 2"/>
    <property type="match status" value="1"/>
</dbReference>
<dbReference type="Gene3D" id="3.40.50.300">
    <property type="entry name" value="P-loop containing nucleotide triphosphate hydrolases"/>
    <property type="match status" value="1"/>
</dbReference>
<dbReference type="HAMAP" id="MF_00109">
    <property type="entry name" value="Shikimate_kinase"/>
    <property type="match status" value="1"/>
</dbReference>
<dbReference type="HAMAP" id="MF_01269">
    <property type="entry name" value="Shikimate_kinase_2"/>
    <property type="match status" value="1"/>
</dbReference>
<dbReference type="InterPro" id="IPR027417">
    <property type="entry name" value="P-loop_NTPase"/>
</dbReference>
<dbReference type="InterPro" id="IPR031322">
    <property type="entry name" value="Shikimate/glucono_kinase"/>
</dbReference>
<dbReference type="InterPro" id="IPR000623">
    <property type="entry name" value="Shikimate_kinase/TSH1"/>
</dbReference>
<dbReference type="InterPro" id="IPR027544">
    <property type="entry name" value="Shikimate_kinase_2"/>
</dbReference>
<dbReference type="InterPro" id="IPR023000">
    <property type="entry name" value="Shikimate_kinase_CS"/>
</dbReference>
<dbReference type="NCBIfam" id="NF002988">
    <property type="entry name" value="PRK03731.1"/>
    <property type="match status" value="1"/>
</dbReference>
<dbReference type="PANTHER" id="PTHR21087">
    <property type="entry name" value="SHIKIMATE KINASE"/>
    <property type="match status" value="1"/>
</dbReference>
<dbReference type="PANTHER" id="PTHR21087:SF21">
    <property type="entry name" value="SHIKIMATE KINASE 2"/>
    <property type="match status" value="1"/>
</dbReference>
<dbReference type="Pfam" id="PF01202">
    <property type="entry name" value="SKI"/>
    <property type="match status" value="1"/>
</dbReference>
<dbReference type="PRINTS" id="PR01100">
    <property type="entry name" value="SHIKIMTKNASE"/>
</dbReference>
<dbReference type="SUPFAM" id="SSF52540">
    <property type="entry name" value="P-loop containing nucleoside triphosphate hydrolases"/>
    <property type="match status" value="1"/>
</dbReference>
<dbReference type="PROSITE" id="PS01128">
    <property type="entry name" value="SHIKIMATE_KINASE"/>
    <property type="match status" value="1"/>
</dbReference>